<sequence length="330" mass="34443">MTHTLRVIFAGTPEFAAAALAAIHKAGFPVPLVLTQPDRPAGRGMKLQASAVKRYAVEHGMAVAQPPSLRRAGKYPAEAADAIELLRTTPHDVMVVAAYGLLLPQEVLDIPRAGCINIHASLLPRWRGAAPIHRAIEAGDAETGVTLMQMDVGLDTGAMIEEARIAIAPDDTTATLHDRLAADGARLIVDALVRLERDGTLPATPQPADGVTYAEKIGKHEAALDWRKPADVLARQVRAFDPFPGGVATLDGAAIKLWAAEPVATDGTIASAAPGTIVEAAPEGVVVACGSGALRVTQLQKPGGKRLPAREFLAGSPLAAGQRFALPDVD</sequence>
<reference key="1">
    <citation type="submission" date="2006-08" db="EMBL/GenBank/DDBJ databases">
        <title>Complete sequence of chromosome 1 of Burkholderia cenocepacia HI2424.</title>
        <authorList>
            <person name="Copeland A."/>
            <person name="Lucas S."/>
            <person name="Lapidus A."/>
            <person name="Barry K."/>
            <person name="Detter J.C."/>
            <person name="Glavina del Rio T."/>
            <person name="Hammon N."/>
            <person name="Israni S."/>
            <person name="Pitluck S."/>
            <person name="Chain P."/>
            <person name="Malfatti S."/>
            <person name="Shin M."/>
            <person name="Vergez L."/>
            <person name="Schmutz J."/>
            <person name="Larimer F."/>
            <person name="Land M."/>
            <person name="Hauser L."/>
            <person name="Kyrpides N."/>
            <person name="Kim E."/>
            <person name="LiPuma J.J."/>
            <person name="Gonzalez C.F."/>
            <person name="Konstantinidis K."/>
            <person name="Tiedje J.M."/>
            <person name="Richardson P."/>
        </authorList>
    </citation>
    <scope>NUCLEOTIDE SEQUENCE [LARGE SCALE GENOMIC DNA]</scope>
    <source>
        <strain>HI2424</strain>
    </source>
</reference>
<organism>
    <name type="scientific">Burkholderia cenocepacia (strain HI2424)</name>
    <dbReference type="NCBI Taxonomy" id="331272"/>
    <lineage>
        <taxon>Bacteria</taxon>
        <taxon>Pseudomonadati</taxon>
        <taxon>Pseudomonadota</taxon>
        <taxon>Betaproteobacteria</taxon>
        <taxon>Burkholderiales</taxon>
        <taxon>Burkholderiaceae</taxon>
        <taxon>Burkholderia</taxon>
        <taxon>Burkholderia cepacia complex</taxon>
    </lineage>
</organism>
<comment type="function">
    <text evidence="1">Attaches a formyl group to the free amino group of methionyl-tRNA(fMet). The formyl group appears to play a dual role in the initiator identity of N-formylmethionyl-tRNA by promoting its recognition by IF2 and preventing the misappropriation of this tRNA by the elongation apparatus.</text>
</comment>
<comment type="catalytic activity">
    <reaction evidence="1">
        <text>L-methionyl-tRNA(fMet) + (6R)-10-formyltetrahydrofolate = N-formyl-L-methionyl-tRNA(fMet) + (6S)-5,6,7,8-tetrahydrofolate + H(+)</text>
        <dbReference type="Rhea" id="RHEA:24380"/>
        <dbReference type="Rhea" id="RHEA-COMP:9952"/>
        <dbReference type="Rhea" id="RHEA-COMP:9953"/>
        <dbReference type="ChEBI" id="CHEBI:15378"/>
        <dbReference type="ChEBI" id="CHEBI:57453"/>
        <dbReference type="ChEBI" id="CHEBI:78530"/>
        <dbReference type="ChEBI" id="CHEBI:78844"/>
        <dbReference type="ChEBI" id="CHEBI:195366"/>
        <dbReference type="EC" id="2.1.2.9"/>
    </reaction>
</comment>
<comment type="similarity">
    <text evidence="1">Belongs to the Fmt family.</text>
</comment>
<evidence type="ECO:0000255" key="1">
    <source>
        <dbReference type="HAMAP-Rule" id="MF_00182"/>
    </source>
</evidence>
<accession>A0KBJ7</accession>
<feature type="chain" id="PRO_1000020031" description="Methionyl-tRNA formyltransferase">
    <location>
        <begin position="1"/>
        <end position="330"/>
    </location>
</feature>
<feature type="binding site" evidence="1">
    <location>
        <begin position="121"/>
        <end position="124"/>
    </location>
    <ligand>
        <name>(6S)-5,6,7,8-tetrahydrofolate</name>
        <dbReference type="ChEBI" id="CHEBI:57453"/>
    </ligand>
</feature>
<dbReference type="EC" id="2.1.2.9" evidence="1"/>
<dbReference type="EMBL" id="CP000458">
    <property type="protein sequence ID" value="ABK09874.1"/>
    <property type="molecule type" value="Genomic_DNA"/>
</dbReference>
<dbReference type="RefSeq" id="WP_011546486.1">
    <property type="nucleotide sequence ID" value="NC_008542.1"/>
</dbReference>
<dbReference type="SMR" id="A0KBJ7"/>
<dbReference type="KEGG" id="bch:Bcen2424_3126"/>
<dbReference type="HOGENOM" id="CLU_033347_1_2_4"/>
<dbReference type="GO" id="GO:0005829">
    <property type="term" value="C:cytosol"/>
    <property type="evidence" value="ECO:0007669"/>
    <property type="project" value="TreeGrafter"/>
</dbReference>
<dbReference type="GO" id="GO:0004479">
    <property type="term" value="F:methionyl-tRNA formyltransferase activity"/>
    <property type="evidence" value="ECO:0007669"/>
    <property type="project" value="UniProtKB-UniRule"/>
</dbReference>
<dbReference type="CDD" id="cd08646">
    <property type="entry name" value="FMT_core_Met-tRNA-FMT_N"/>
    <property type="match status" value="1"/>
</dbReference>
<dbReference type="CDD" id="cd08704">
    <property type="entry name" value="Met_tRNA_FMT_C"/>
    <property type="match status" value="1"/>
</dbReference>
<dbReference type="Gene3D" id="3.10.25.10">
    <property type="entry name" value="Formyl transferase, C-terminal domain"/>
    <property type="match status" value="1"/>
</dbReference>
<dbReference type="Gene3D" id="3.40.50.170">
    <property type="entry name" value="Formyl transferase, N-terminal domain"/>
    <property type="match status" value="1"/>
</dbReference>
<dbReference type="HAMAP" id="MF_00182">
    <property type="entry name" value="Formyl_trans"/>
    <property type="match status" value="1"/>
</dbReference>
<dbReference type="InterPro" id="IPR005794">
    <property type="entry name" value="Fmt"/>
</dbReference>
<dbReference type="InterPro" id="IPR005793">
    <property type="entry name" value="Formyl_trans_C"/>
</dbReference>
<dbReference type="InterPro" id="IPR037022">
    <property type="entry name" value="Formyl_trans_C_sf"/>
</dbReference>
<dbReference type="InterPro" id="IPR002376">
    <property type="entry name" value="Formyl_transf_N"/>
</dbReference>
<dbReference type="InterPro" id="IPR036477">
    <property type="entry name" value="Formyl_transf_N_sf"/>
</dbReference>
<dbReference type="InterPro" id="IPR011034">
    <property type="entry name" value="Formyl_transferase-like_C_sf"/>
</dbReference>
<dbReference type="InterPro" id="IPR001555">
    <property type="entry name" value="GART_AS"/>
</dbReference>
<dbReference type="InterPro" id="IPR044135">
    <property type="entry name" value="Met-tRNA-FMT_C"/>
</dbReference>
<dbReference type="InterPro" id="IPR041711">
    <property type="entry name" value="Met-tRNA-FMT_N"/>
</dbReference>
<dbReference type="NCBIfam" id="TIGR00460">
    <property type="entry name" value="fmt"/>
    <property type="match status" value="1"/>
</dbReference>
<dbReference type="PANTHER" id="PTHR11138">
    <property type="entry name" value="METHIONYL-TRNA FORMYLTRANSFERASE"/>
    <property type="match status" value="1"/>
</dbReference>
<dbReference type="PANTHER" id="PTHR11138:SF5">
    <property type="entry name" value="METHIONYL-TRNA FORMYLTRANSFERASE, MITOCHONDRIAL"/>
    <property type="match status" value="1"/>
</dbReference>
<dbReference type="Pfam" id="PF02911">
    <property type="entry name" value="Formyl_trans_C"/>
    <property type="match status" value="1"/>
</dbReference>
<dbReference type="Pfam" id="PF00551">
    <property type="entry name" value="Formyl_trans_N"/>
    <property type="match status" value="1"/>
</dbReference>
<dbReference type="SUPFAM" id="SSF50486">
    <property type="entry name" value="FMT C-terminal domain-like"/>
    <property type="match status" value="1"/>
</dbReference>
<dbReference type="SUPFAM" id="SSF53328">
    <property type="entry name" value="Formyltransferase"/>
    <property type="match status" value="1"/>
</dbReference>
<dbReference type="PROSITE" id="PS00373">
    <property type="entry name" value="GART"/>
    <property type="match status" value="1"/>
</dbReference>
<keyword id="KW-0648">Protein biosynthesis</keyword>
<keyword id="KW-0808">Transferase</keyword>
<protein>
    <recommendedName>
        <fullName evidence="1">Methionyl-tRNA formyltransferase</fullName>
        <ecNumber evidence="1">2.1.2.9</ecNumber>
    </recommendedName>
</protein>
<name>FMT_BURCH</name>
<proteinExistence type="inferred from homology"/>
<gene>
    <name evidence="1" type="primary">fmt</name>
    <name type="ordered locus">Bcen2424_3126</name>
</gene>